<organism>
    <name type="scientific">Sclerotinia sclerotiorum (strain ATCC 18683 / 1980 / Ss-1)</name>
    <name type="common">White mold</name>
    <name type="synonym">Whetzelinia sclerotiorum</name>
    <dbReference type="NCBI Taxonomy" id="665079"/>
    <lineage>
        <taxon>Eukaryota</taxon>
        <taxon>Fungi</taxon>
        <taxon>Dikarya</taxon>
        <taxon>Ascomycota</taxon>
        <taxon>Pezizomycotina</taxon>
        <taxon>Leotiomycetes</taxon>
        <taxon>Helotiales</taxon>
        <taxon>Sclerotiniaceae</taxon>
        <taxon>Sclerotinia</taxon>
    </lineage>
</organism>
<keyword id="KW-0456">Lyase</keyword>
<keyword id="KW-0472">Membrane</keyword>
<keyword id="KW-0479">Metal-binding</keyword>
<keyword id="KW-0496">Mitochondrion</keyword>
<keyword id="KW-0999">Mitochondrion inner membrane</keyword>
<keyword id="KW-1185">Reference proteome</keyword>
<keyword id="KW-0831">Ubiquinone biosynthesis</keyword>
<keyword id="KW-0862">Zinc</keyword>
<proteinExistence type="inferred from homology"/>
<feature type="chain" id="PRO_0000388138" description="Ubiquinone biosynthesis protein coq4, mitochondrial">
    <location>
        <begin position="1"/>
        <end position="282"/>
    </location>
</feature>
<feature type="binding site" evidence="1">
    <location>
        <position position="169"/>
    </location>
    <ligand>
        <name>Zn(2+)</name>
        <dbReference type="ChEBI" id="CHEBI:29105"/>
    </ligand>
</feature>
<feature type="binding site" evidence="1">
    <location>
        <position position="170"/>
    </location>
    <ligand>
        <name>Zn(2+)</name>
        <dbReference type="ChEBI" id="CHEBI:29105"/>
    </ligand>
</feature>
<feature type="binding site" evidence="1">
    <location>
        <position position="173"/>
    </location>
    <ligand>
        <name>Zn(2+)</name>
        <dbReference type="ChEBI" id="CHEBI:29105"/>
    </ligand>
</feature>
<feature type="binding site" evidence="1">
    <location>
        <position position="185"/>
    </location>
    <ligand>
        <name>Zn(2+)</name>
        <dbReference type="ChEBI" id="CHEBI:29105"/>
    </ligand>
</feature>
<name>COQ4_SCLS1</name>
<comment type="function">
    <text evidence="1">Lyase that catalyzes the C1-decarboxylation of 4-hydroxy-3-methoxy-5-(all-trans-polyprenyl)benzoic acid into 2-methoxy-6-(all-trans-polyprenyl)phenol during ubiquinone biosynthesis.</text>
</comment>
<comment type="catalytic activity">
    <reaction evidence="1">
        <text>a 4-hydroxy-3-methoxy-5-(all-trans-polyprenyl)benzoate + H(+) = a 2-methoxy-6-(all-trans-polyprenyl)phenol + CO2</text>
        <dbReference type="Rhea" id="RHEA:81179"/>
        <dbReference type="Rhea" id="RHEA-COMP:9551"/>
        <dbReference type="Rhea" id="RHEA-COMP:10931"/>
        <dbReference type="ChEBI" id="CHEBI:15378"/>
        <dbReference type="ChEBI" id="CHEBI:16526"/>
        <dbReference type="ChEBI" id="CHEBI:62731"/>
        <dbReference type="ChEBI" id="CHEBI:84443"/>
        <dbReference type="EC" id="4.1.1.130"/>
    </reaction>
</comment>
<comment type="cofactor">
    <cofactor evidence="1">
        <name>Zn(2+)</name>
        <dbReference type="ChEBI" id="CHEBI:29105"/>
    </cofactor>
</comment>
<comment type="pathway">
    <text evidence="1">Cofactor biosynthesis; ubiquinone biosynthesis.</text>
</comment>
<comment type="subunit">
    <text evidence="1">Component of a multi-subunit COQ enzyme complex, composed of at least coq3, coq4, coq5, coq6, coq7 and coq9.</text>
</comment>
<comment type="subcellular location">
    <subcellularLocation>
        <location evidence="1">Mitochondrion inner membrane</location>
        <topology evidence="1">Peripheral membrane protein</topology>
        <orientation evidence="1">Matrix side</orientation>
    </subcellularLocation>
</comment>
<comment type="miscellaneous">
    <text evidence="1">This protein may be expected to contain an N-terminal transit peptide but none has been predicted.</text>
</comment>
<comment type="similarity">
    <text evidence="1">Belongs to the COQ4 family.</text>
</comment>
<comment type="sequence caution" evidence="2">
    <conflict type="erroneous gene model prediction">
        <sequence resource="EMBL-CDS" id="EDN98310"/>
    </conflict>
</comment>
<dbReference type="EC" id="4.1.1.130" evidence="1"/>
<dbReference type="EMBL" id="CH476643">
    <property type="protein sequence ID" value="EDN98310.1"/>
    <property type="status" value="ALT_SEQ"/>
    <property type="molecule type" value="Genomic_DNA"/>
</dbReference>
<dbReference type="RefSeq" id="XP_001586075.1">
    <property type="nucleotide sequence ID" value="XM_001586025.1"/>
</dbReference>
<dbReference type="SMR" id="A7F6D9"/>
<dbReference type="FunCoup" id="A7F6D9">
    <property type="interactions" value="486"/>
</dbReference>
<dbReference type="STRING" id="665079.A7F6D9"/>
<dbReference type="GeneID" id="5482028"/>
<dbReference type="KEGG" id="ssl:SS1G_13168"/>
<dbReference type="VEuPathDB" id="FungiDB:sscle_02g020550"/>
<dbReference type="eggNOG" id="KOG3244">
    <property type="taxonomic scope" value="Eukaryota"/>
</dbReference>
<dbReference type="InParanoid" id="A7F6D9"/>
<dbReference type="OrthoDB" id="4249at2759"/>
<dbReference type="UniPathway" id="UPA00232"/>
<dbReference type="Proteomes" id="UP000001312">
    <property type="component" value="Unassembled WGS sequence"/>
</dbReference>
<dbReference type="GO" id="GO:0031314">
    <property type="term" value="C:extrinsic component of mitochondrial inner membrane"/>
    <property type="evidence" value="ECO:0007669"/>
    <property type="project" value="UniProtKB-UniRule"/>
</dbReference>
<dbReference type="GO" id="GO:0005739">
    <property type="term" value="C:mitochondrion"/>
    <property type="evidence" value="ECO:0000318"/>
    <property type="project" value="GO_Central"/>
</dbReference>
<dbReference type="GO" id="GO:0006744">
    <property type="term" value="P:ubiquinone biosynthetic process"/>
    <property type="evidence" value="ECO:0007669"/>
    <property type="project" value="UniProtKB-UniRule"/>
</dbReference>
<dbReference type="HAMAP" id="MF_03111">
    <property type="entry name" value="Coq4"/>
    <property type="match status" value="1"/>
</dbReference>
<dbReference type="InterPro" id="IPR007715">
    <property type="entry name" value="Coq4"/>
</dbReference>
<dbReference type="InterPro" id="IPR027540">
    <property type="entry name" value="Coq4_euk"/>
</dbReference>
<dbReference type="PANTHER" id="PTHR12922">
    <property type="entry name" value="UBIQUINONE BIOSYNTHESIS PROTEIN"/>
    <property type="match status" value="1"/>
</dbReference>
<dbReference type="PANTHER" id="PTHR12922:SF7">
    <property type="entry name" value="UBIQUINONE BIOSYNTHESIS PROTEIN COQ4 HOMOLOG, MITOCHONDRIAL"/>
    <property type="match status" value="1"/>
</dbReference>
<dbReference type="Pfam" id="PF05019">
    <property type="entry name" value="Coq4"/>
    <property type="match status" value="1"/>
</dbReference>
<protein>
    <recommendedName>
        <fullName evidence="1">Ubiquinone biosynthesis protein coq4, mitochondrial</fullName>
    </recommendedName>
    <alternativeName>
        <fullName>4-hydroxy-3-methoxy-5-polyprenylbenzoate decarboxylase</fullName>
        <ecNumber evidence="1">4.1.1.130</ecNumber>
    </alternativeName>
    <alternativeName>
        <fullName evidence="1">Coenzyme Q biosynthesis protein 4</fullName>
    </alternativeName>
</protein>
<gene>
    <name type="primary">coq4</name>
    <name type="ORF">SS1G_13168</name>
</gene>
<accession>A7F6D9</accession>
<evidence type="ECO:0000255" key="1">
    <source>
        <dbReference type="HAMAP-Rule" id="MF_03111"/>
    </source>
</evidence>
<evidence type="ECO:0000305" key="2"/>
<sequence length="282" mass="32126">MSLSLSPGLYTQAARLPRELLTVCSITIATRSFSVLHRPTPNYPGHVPLTSIERSGLAVGSAIMAFFNPYRADLIAACGEATATPYFIYRLRDAMLSSPTGRRILRDRPRISSKTLSMQHLRTLPTNAVGRCYADWLDREGVSPDTRDSVKYIDDEECAYVMQRYRECHDFYHAITGLPIVREGEVALKAFEFANTLLPMTGLSMFAVMSLKPAERRRFFTIYAPWALTNGLKADELINVYWEEQLERSVEELREELGIEKPLDLREIRRAEKERKKAQKAT</sequence>
<reference key="1">
    <citation type="journal article" date="2011" name="PLoS Genet.">
        <title>Genomic analysis of the necrotrophic fungal pathogens Sclerotinia sclerotiorum and Botrytis cinerea.</title>
        <authorList>
            <person name="Amselem J."/>
            <person name="Cuomo C.A."/>
            <person name="van Kan J.A.L."/>
            <person name="Viaud M."/>
            <person name="Benito E.P."/>
            <person name="Couloux A."/>
            <person name="Coutinho P.M."/>
            <person name="de Vries R.P."/>
            <person name="Dyer P.S."/>
            <person name="Fillinger S."/>
            <person name="Fournier E."/>
            <person name="Gout L."/>
            <person name="Hahn M."/>
            <person name="Kohn L."/>
            <person name="Lapalu N."/>
            <person name="Plummer K.M."/>
            <person name="Pradier J.-M."/>
            <person name="Quevillon E."/>
            <person name="Sharon A."/>
            <person name="Simon A."/>
            <person name="ten Have A."/>
            <person name="Tudzynski B."/>
            <person name="Tudzynski P."/>
            <person name="Wincker P."/>
            <person name="Andrew M."/>
            <person name="Anthouard V."/>
            <person name="Beever R.E."/>
            <person name="Beffa R."/>
            <person name="Benoit I."/>
            <person name="Bouzid O."/>
            <person name="Brault B."/>
            <person name="Chen Z."/>
            <person name="Choquer M."/>
            <person name="Collemare J."/>
            <person name="Cotton P."/>
            <person name="Danchin E.G."/>
            <person name="Da Silva C."/>
            <person name="Gautier A."/>
            <person name="Giraud C."/>
            <person name="Giraud T."/>
            <person name="Gonzalez C."/>
            <person name="Grossetete S."/>
            <person name="Gueldener U."/>
            <person name="Henrissat B."/>
            <person name="Howlett B.J."/>
            <person name="Kodira C."/>
            <person name="Kretschmer M."/>
            <person name="Lappartient A."/>
            <person name="Leroch M."/>
            <person name="Levis C."/>
            <person name="Mauceli E."/>
            <person name="Neuveglise C."/>
            <person name="Oeser B."/>
            <person name="Pearson M."/>
            <person name="Poulain J."/>
            <person name="Poussereau N."/>
            <person name="Quesneville H."/>
            <person name="Rascle C."/>
            <person name="Schumacher J."/>
            <person name="Segurens B."/>
            <person name="Sexton A."/>
            <person name="Silva E."/>
            <person name="Sirven C."/>
            <person name="Soanes D.M."/>
            <person name="Talbot N.J."/>
            <person name="Templeton M."/>
            <person name="Yandava C."/>
            <person name="Yarden O."/>
            <person name="Zeng Q."/>
            <person name="Rollins J.A."/>
            <person name="Lebrun M.-H."/>
            <person name="Dickman M."/>
        </authorList>
    </citation>
    <scope>NUCLEOTIDE SEQUENCE [LARGE SCALE GENOMIC DNA]</scope>
    <source>
        <strain>ATCC 18683 / 1980 / Ss-1</strain>
    </source>
</reference>